<evidence type="ECO:0000255" key="1">
    <source>
        <dbReference type="HAMAP-Rule" id="MF_00003"/>
    </source>
</evidence>
<accession>B1LFR9</accession>
<keyword id="KW-0963">Cytoplasm</keyword>
<keyword id="KW-0690">Ribosome biogenesis</keyword>
<proteinExistence type="inferred from homology"/>
<name>RBFA_ECOSM</name>
<gene>
    <name evidence="1" type="primary">rbfA</name>
    <name type="ordered locus">EcSMS35_3463</name>
</gene>
<comment type="function">
    <text evidence="1">One of several proteins that assist in the late maturation steps of the functional core of the 30S ribosomal subunit. Associates with free 30S ribosomal subunits (but not with 30S subunits that are part of 70S ribosomes or polysomes). Required for efficient processing of 16S rRNA. May interact with the 5'-terminal helix region of 16S rRNA.</text>
</comment>
<comment type="subunit">
    <text evidence="1">Monomer. Binds 30S ribosomal subunits, but not 50S ribosomal subunits or 70S ribosomes.</text>
</comment>
<comment type="subcellular location">
    <subcellularLocation>
        <location evidence="1">Cytoplasm</location>
    </subcellularLocation>
</comment>
<comment type="similarity">
    <text evidence="1">Belongs to the RbfA family.</text>
</comment>
<sequence length="133" mass="15154">MAKEFGRPQRVAQEMQKEIALILQREIKDPRLGMMTTVSGVEMSRDLAYAKVYVTFLNDKDEDAVKAGIKALQEASGFIRSLLGKAMRLRIVPELTFFYDNSLVEGMRMSNLVTSVVKHDEERRVNPDDSKED</sequence>
<reference key="1">
    <citation type="journal article" date="2008" name="J. Bacteriol.">
        <title>Insights into the environmental resistance gene pool from the genome sequence of the multidrug-resistant environmental isolate Escherichia coli SMS-3-5.</title>
        <authorList>
            <person name="Fricke W.F."/>
            <person name="Wright M.S."/>
            <person name="Lindell A.H."/>
            <person name="Harkins D.M."/>
            <person name="Baker-Austin C."/>
            <person name="Ravel J."/>
            <person name="Stepanauskas R."/>
        </authorList>
    </citation>
    <scope>NUCLEOTIDE SEQUENCE [LARGE SCALE GENOMIC DNA]</scope>
    <source>
        <strain>SMS-3-5 / SECEC</strain>
    </source>
</reference>
<protein>
    <recommendedName>
        <fullName evidence="1">Ribosome-binding factor A</fullName>
    </recommendedName>
</protein>
<dbReference type="EMBL" id="CP000970">
    <property type="protein sequence ID" value="ACB16443.1"/>
    <property type="molecule type" value="Genomic_DNA"/>
</dbReference>
<dbReference type="RefSeq" id="WP_001040205.1">
    <property type="nucleotide sequence ID" value="NC_010498.1"/>
</dbReference>
<dbReference type="SMR" id="B1LFR9"/>
<dbReference type="GeneID" id="93778816"/>
<dbReference type="KEGG" id="ecm:EcSMS35_3463"/>
<dbReference type="HOGENOM" id="CLU_089475_5_0_6"/>
<dbReference type="Proteomes" id="UP000007011">
    <property type="component" value="Chromosome"/>
</dbReference>
<dbReference type="GO" id="GO:0005829">
    <property type="term" value="C:cytosol"/>
    <property type="evidence" value="ECO:0007669"/>
    <property type="project" value="TreeGrafter"/>
</dbReference>
<dbReference type="GO" id="GO:0043024">
    <property type="term" value="F:ribosomal small subunit binding"/>
    <property type="evidence" value="ECO:0007669"/>
    <property type="project" value="TreeGrafter"/>
</dbReference>
<dbReference type="GO" id="GO:0030490">
    <property type="term" value="P:maturation of SSU-rRNA"/>
    <property type="evidence" value="ECO:0007669"/>
    <property type="project" value="UniProtKB-UniRule"/>
</dbReference>
<dbReference type="FunFam" id="3.30.300.20:FF:000007">
    <property type="entry name" value="Ribosome-binding factor A"/>
    <property type="match status" value="1"/>
</dbReference>
<dbReference type="Gene3D" id="3.30.300.20">
    <property type="match status" value="1"/>
</dbReference>
<dbReference type="HAMAP" id="MF_00003">
    <property type="entry name" value="RbfA"/>
    <property type="match status" value="1"/>
</dbReference>
<dbReference type="InterPro" id="IPR015946">
    <property type="entry name" value="KH_dom-like_a/b"/>
</dbReference>
<dbReference type="InterPro" id="IPR000238">
    <property type="entry name" value="RbfA"/>
</dbReference>
<dbReference type="InterPro" id="IPR023799">
    <property type="entry name" value="RbfA_dom_sf"/>
</dbReference>
<dbReference type="InterPro" id="IPR020053">
    <property type="entry name" value="Ribosome-bd_factorA_CS"/>
</dbReference>
<dbReference type="NCBIfam" id="TIGR00082">
    <property type="entry name" value="rbfA"/>
    <property type="match status" value="1"/>
</dbReference>
<dbReference type="PANTHER" id="PTHR33515">
    <property type="entry name" value="RIBOSOME-BINDING FACTOR A, CHLOROPLASTIC-RELATED"/>
    <property type="match status" value="1"/>
</dbReference>
<dbReference type="PANTHER" id="PTHR33515:SF1">
    <property type="entry name" value="RIBOSOME-BINDING FACTOR A, CHLOROPLASTIC-RELATED"/>
    <property type="match status" value="1"/>
</dbReference>
<dbReference type="Pfam" id="PF02033">
    <property type="entry name" value="RBFA"/>
    <property type="match status" value="1"/>
</dbReference>
<dbReference type="SUPFAM" id="SSF89919">
    <property type="entry name" value="Ribosome-binding factor A, RbfA"/>
    <property type="match status" value="1"/>
</dbReference>
<dbReference type="PROSITE" id="PS01319">
    <property type="entry name" value="RBFA"/>
    <property type="match status" value="1"/>
</dbReference>
<organism>
    <name type="scientific">Escherichia coli (strain SMS-3-5 / SECEC)</name>
    <dbReference type="NCBI Taxonomy" id="439855"/>
    <lineage>
        <taxon>Bacteria</taxon>
        <taxon>Pseudomonadati</taxon>
        <taxon>Pseudomonadota</taxon>
        <taxon>Gammaproteobacteria</taxon>
        <taxon>Enterobacterales</taxon>
        <taxon>Enterobacteriaceae</taxon>
        <taxon>Escherichia</taxon>
    </lineage>
</organism>
<feature type="chain" id="PRO_1000193253" description="Ribosome-binding factor A">
    <location>
        <begin position="1"/>
        <end position="133"/>
    </location>
</feature>